<dbReference type="EC" id="3.1.1.1" evidence="4"/>
<dbReference type="EMBL" id="HG970333">
    <property type="protein sequence ID" value="CEF77964.1"/>
    <property type="molecule type" value="Genomic_DNA"/>
</dbReference>
<dbReference type="RefSeq" id="XP_011322549.1">
    <property type="nucleotide sequence ID" value="XM_011324247.1"/>
</dbReference>
<dbReference type="SMR" id="I1RHF8"/>
<dbReference type="STRING" id="229533.I1RHF8"/>
<dbReference type="ESTHER" id="gibze-a8w610">
    <property type="family name" value="Fungal_carboxylesterase_lipase"/>
</dbReference>
<dbReference type="KEGG" id="fgr:FGSG_03209"/>
<dbReference type="VEuPathDB" id="FungiDB:FGRAMPH1_01G12323"/>
<dbReference type="eggNOG" id="KOG4389">
    <property type="taxonomic scope" value="Eukaryota"/>
</dbReference>
<dbReference type="HOGENOM" id="CLU_006586_10_3_1"/>
<dbReference type="InParanoid" id="I1RHF8"/>
<dbReference type="OrthoDB" id="7684at110618"/>
<dbReference type="Proteomes" id="UP000070720">
    <property type="component" value="Chromosome 2"/>
</dbReference>
<dbReference type="GO" id="GO:0005576">
    <property type="term" value="C:extracellular region"/>
    <property type="evidence" value="ECO:0007669"/>
    <property type="project" value="UniProtKB-SubCell"/>
</dbReference>
<dbReference type="GO" id="GO:0016787">
    <property type="term" value="F:hydrolase activity"/>
    <property type="evidence" value="ECO:0007669"/>
    <property type="project" value="UniProtKB-KW"/>
</dbReference>
<dbReference type="GO" id="GO:0016042">
    <property type="term" value="P:lipid catabolic process"/>
    <property type="evidence" value="ECO:0007669"/>
    <property type="project" value="UniProtKB-KW"/>
</dbReference>
<dbReference type="Gene3D" id="3.40.50.1820">
    <property type="entry name" value="alpha/beta hydrolase"/>
    <property type="match status" value="1"/>
</dbReference>
<dbReference type="InterPro" id="IPR029058">
    <property type="entry name" value="AB_hydrolase_fold"/>
</dbReference>
<dbReference type="InterPro" id="IPR002018">
    <property type="entry name" value="CarbesteraseB"/>
</dbReference>
<dbReference type="InterPro" id="IPR019826">
    <property type="entry name" value="Carboxylesterase_B_AS"/>
</dbReference>
<dbReference type="InterPro" id="IPR050309">
    <property type="entry name" value="Type-B_Carboxylest/Lipase"/>
</dbReference>
<dbReference type="PANTHER" id="PTHR11559">
    <property type="entry name" value="CARBOXYLESTERASE"/>
    <property type="match status" value="1"/>
</dbReference>
<dbReference type="Pfam" id="PF00135">
    <property type="entry name" value="COesterase"/>
    <property type="match status" value="1"/>
</dbReference>
<dbReference type="SUPFAM" id="SSF53474">
    <property type="entry name" value="alpha/beta-Hydrolases"/>
    <property type="match status" value="1"/>
</dbReference>
<dbReference type="PROSITE" id="PS00122">
    <property type="entry name" value="CARBOXYLESTERASE_B_1"/>
    <property type="match status" value="1"/>
</dbReference>
<dbReference type="PROSITE" id="PS01173">
    <property type="entry name" value="LIPASE_GDXG_HIS"/>
    <property type="match status" value="1"/>
</dbReference>
<evidence type="ECO:0000255" key="1"/>
<evidence type="ECO:0000255" key="2">
    <source>
        <dbReference type="PROSITE-ProRule" id="PRU00498"/>
    </source>
</evidence>
<evidence type="ECO:0000255" key="3">
    <source>
        <dbReference type="PROSITE-ProRule" id="PRU10039"/>
    </source>
</evidence>
<evidence type="ECO:0000269" key="4">
    <source>
    </source>
</evidence>
<evidence type="ECO:0000303" key="5">
    <source>
    </source>
</evidence>
<evidence type="ECO:0000305" key="6"/>
<accession>I1RHF8</accession>
<name>FGL4_GIBZE</name>
<protein>
    <recommendedName>
        <fullName evidence="5">Secreted lipase 4</fullName>
        <ecNumber evidence="4">3.1.1.1</ecNumber>
    </recommendedName>
</protein>
<sequence>MKLLTNIGTLLALSPVQQVSATPHTGEHYNLVKLEGYGSVSGTTVNSTLTKKDLPTTVDAWMGIDYALQPTGHRRFKAAEWPKPFKGVKRADSYGKTCIQEIASKTPLESQSEACLNFNVFRTKGVPLSKKLPVLVWIHGGAFFSGSWASFDGAAFAASSKEPIVVVNFHYRVNSLGFLPSKLFKDEGLSNLGIRDQRLLFEFVQKHIGAFGGDKNAVTIGGRSAGGHSVGIHYFHNYGKDNKALFAQAIHQSGSVTSRAFPNDTYPLYKTQYDEYTAYLGCDNKKTNKATLKCLREADIDSIRNISTKIFYDYNDVLTWPFQPVQGGPLFEKPGSQSGYDGTFYHVPTITSNVNDEGKFYTPGNLETDSEFLDYLHNISPALTKKDLSELSALYPDPAKYDNSPFANSPNSTQYNRISAAWSDYAYICPGQETAYRASTAGVPTWKVRFNTNNSFPAWQGIPHTADTSYTWNGESTQYPEISHIYHGYLSSFVTAGNPNSHRYPGSPEWPAYHGDDESPLQIVVQPGDTKVEKDEIRKEACLWWRDPERAPRLNK</sequence>
<organism>
    <name type="scientific">Gibberella zeae (strain ATCC MYA-4620 / CBS 123657 / FGSC 9075 / NRRL 31084 / PH-1)</name>
    <name type="common">Wheat head blight fungus</name>
    <name type="synonym">Fusarium graminearum</name>
    <dbReference type="NCBI Taxonomy" id="229533"/>
    <lineage>
        <taxon>Eukaryota</taxon>
        <taxon>Fungi</taxon>
        <taxon>Dikarya</taxon>
        <taxon>Ascomycota</taxon>
        <taxon>Pezizomycotina</taxon>
        <taxon>Sordariomycetes</taxon>
        <taxon>Hypocreomycetidae</taxon>
        <taxon>Hypocreales</taxon>
        <taxon>Nectriaceae</taxon>
        <taxon>Fusarium</taxon>
    </lineage>
</organism>
<keyword id="KW-0325">Glycoprotein</keyword>
<keyword id="KW-0378">Hydrolase</keyword>
<keyword id="KW-0442">Lipid degradation</keyword>
<keyword id="KW-0443">Lipid metabolism</keyword>
<keyword id="KW-1185">Reference proteome</keyword>
<keyword id="KW-0964">Secreted</keyword>
<keyword id="KW-0732">Signal</keyword>
<proteinExistence type="evidence at protein level"/>
<feature type="signal peptide" evidence="1">
    <location>
        <begin position="1"/>
        <end position="21"/>
    </location>
</feature>
<feature type="chain" id="PRO_5009997661" description="Secreted lipase 4">
    <location>
        <begin position="22"/>
        <end position="556"/>
    </location>
</feature>
<feature type="glycosylation site" description="N-linked (GlcNAc...) asparagine" evidence="2">
    <location>
        <position position="46"/>
    </location>
</feature>
<feature type="glycosylation site" description="N-linked (GlcNAc...) asparagine" evidence="2">
    <location>
        <position position="263"/>
    </location>
</feature>
<feature type="glycosylation site" description="N-linked (GlcNAc...) asparagine" evidence="2">
    <location>
        <position position="305"/>
    </location>
</feature>
<feature type="glycosylation site" description="N-linked (GlcNAc...) asparagine" evidence="2">
    <location>
        <position position="411"/>
    </location>
</feature>
<feature type="glycosylation site" description="N-linked (GlcNAc...) asparagine" evidence="2">
    <location>
        <position position="453"/>
    </location>
</feature>
<comment type="function">
    <text evidence="4">Secreted lipase involved in plant virulence (PubMed:25919623). Has a substrate preference for p-nitrophenyl esters with a carbon chain length of C12 (p-nitrophenyl laureate) (PubMed:25919623).</text>
</comment>
<comment type="catalytic activity">
    <reaction evidence="3">
        <text>a carboxylic ester + H2O = an alcohol + a carboxylate + H(+)</text>
        <dbReference type="Rhea" id="RHEA:21164"/>
        <dbReference type="ChEBI" id="CHEBI:15377"/>
        <dbReference type="ChEBI" id="CHEBI:15378"/>
        <dbReference type="ChEBI" id="CHEBI:29067"/>
        <dbReference type="ChEBI" id="CHEBI:30879"/>
        <dbReference type="ChEBI" id="CHEBI:33308"/>
        <dbReference type="EC" id="3.1.1.1"/>
    </reaction>
</comment>
<comment type="biophysicochemical properties">
    <phDependence>
        <text evidence="4">Optimum pH is 7.0.</text>
    </phDependence>
    <temperatureDependence>
        <text evidence="4">Optimum temperature is 35 to 38 degrees Celsius.</text>
    </temperatureDependence>
</comment>
<comment type="subcellular location">
    <subcellularLocation>
        <location evidence="4">Secreted</location>
    </subcellularLocation>
</comment>
<comment type="induction">
    <text evidence="4">Transcript accumulation reached its highest level in 4 hour old cultures.</text>
</comment>
<comment type="similarity">
    <text evidence="6">Belongs to the type-B carboxylesterase/lipase family.</text>
</comment>
<reference key="1">
    <citation type="journal article" date="2007" name="Science">
        <title>The Fusarium graminearum genome reveals a link between localized polymorphism and pathogen specialization.</title>
        <authorList>
            <person name="Cuomo C.A."/>
            <person name="Gueldener U."/>
            <person name="Xu J.-R."/>
            <person name="Trail F."/>
            <person name="Turgeon B.G."/>
            <person name="Di Pietro A."/>
            <person name="Walton J.D."/>
            <person name="Ma L.-J."/>
            <person name="Baker S.E."/>
            <person name="Rep M."/>
            <person name="Adam G."/>
            <person name="Antoniw J."/>
            <person name="Baldwin T."/>
            <person name="Calvo S.E."/>
            <person name="Chang Y.-L."/>
            <person name="DeCaprio D."/>
            <person name="Gale L.R."/>
            <person name="Gnerre S."/>
            <person name="Goswami R.S."/>
            <person name="Hammond-Kosack K."/>
            <person name="Harris L.J."/>
            <person name="Hilburn K."/>
            <person name="Kennell J.C."/>
            <person name="Kroken S."/>
            <person name="Magnuson J.K."/>
            <person name="Mannhaupt G."/>
            <person name="Mauceli E.W."/>
            <person name="Mewes H.-W."/>
            <person name="Mitterbauer R."/>
            <person name="Muehlbauer G."/>
            <person name="Muensterkoetter M."/>
            <person name="Nelson D."/>
            <person name="O'Donnell K."/>
            <person name="Ouellet T."/>
            <person name="Qi W."/>
            <person name="Quesneville H."/>
            <person name="Roncero M.I.G."/>
            <person name="Seong K.-Y."/>
            <person name="Tetko I.V."/>
            <person name="Urban M."/>
            <person name="Waalwijk C."/>
            <person name="Ward T.J."/>
            <person name="Yao J."/>
            <person name="Birren B.W."/>
            <person name="Kistler H.C."/>
        </authorList>
    </citation>
    <scope>NUCLEOTIDE SEQUENCE [LARGE SCALE GENOMIC DNA]</scope>
    <source>
        <strain>ATCC MYA-4620 / CBS 123657 / FGSC 9075 / NRRL 31084 / PH-1</strain>
    </source>
</reference>
<reference key="2">
    <citation type="journal article" date="2010" name="Nature">
        <title>Comparative genomics reveals mobile pathogenicity chromosomes in Fusarium.</title>
        <authorList>
            <person name="Ma L.-J."/>
            <person name="van der Does H.C."/>
            <person name="Borkovich K.A."/>
            <person name="Coleman J.J."/>
            <person name="Daboussi M.-J."/>
            <person name="Di Pietro A."/>
            <person name="Dufresne M."/>
            <person name="Freitag M."/>
            <person name="Grabherr M."/>
            <person name="Henrissat B."/>
            <person name="Houterman P.M."/>
            <person name="Kang S."/>
            <person name="Shim W.-B."/>
            <person name="Woloshuk C."/>
            <person name="Xie X."/>
            <person name="Xu J.-R."/>
            <person name="Antoniw J."/>
            <person name="Baker S.E."/>
            <person name="Bluhm B.H."/>
            <person name="Breakspear A."/>
            <person name="Brown D.W."/>
            <person name="Butchko R.A.E."/>
            <person name="Chapman S."/>
            <person name="Coulson R."/>
            <person name="Coutinho P.M."/>
            <person name="Danchin E.G.J."/>
            <person name="Diener A."/>
            <person name="Gale L.R."/>
            <person name="Gardiner D.M."/>
            <person name="Goff S."/>
            <person name="Hammond-Kosack K.E."/>
            <person name="Hilburn K."/>
            <person name="Hua-Van A."/>
            <person name="Jonkers W."/>
            <person name="Kazan K."/>
            <person name="Kodira C.D."/>
            <person name="Koehrsen M."/>
            <person name="Kumar L."/>
            <person name="Lee Y.-H."/>
            <person name="Li L."/>
            <person name="Manners J.M."/>
            <person name="Miranda-Saavedra D."/>
            <person name="Mukherjee M."/>
            <person name="Park G."/>
            <person name="Park J."/>
            <person name="Park S.-Y."/>
            <person name="Proctor R.H."/>
            <person name="Regev A."/>
            <person name="Ruiz-Roldan M.C."/>
            <person name="Sain D."/>
            <person name="Sakthikumar S."/>
            <person name="Sykes S."/>
            <person name="Schwartz D.C."/>
            <person name="Turgeon B.G."/>
            <person name="Wapinski I."/>
            <person name="Yoder O."/>
            <person name="Young S."/>
            <person name="Zeng Q."/>
            <person name="Zhou S."/>
            <person name="Galagan J."/>
            <person name="Cuomo C.A."/>
            <person name="Kistler H.C."/>
            <person name="Rep M."/>
        </authorList>
    </citation>
    <scope>GENOME REANNOTATION</scope>
    <source>
        <strain>ATCC MYA-4620 / CBS 123657 / FGSC 9075 / NRRL 31084 / PH-1</strain>
    </source>
</reference>
<reference key="3">
    <citation type="journal article" date="2015" name="BMC Genomics">
        <title>The completed genome sequence of the pathogenic ascomycete fungus Fusarium graminearum.</title>
        <authorList>
            <person name="King R."/>
            <person name="Urban M."/>
            <person name="Hammond-Kosack M.C.U."/>
            <person name="Hassani-Pak K."/>
            <person name="Hammond-Kosack K.E."/>
        </authorList>
    </citation>
    <scope>NUCLEOTIDE SEQUENCE [LARGE SCALE GENOMIC DNA]</scope>
    <source>
        <strain>ATCC MYA-4620 / CBS 123657 / FGSC 9075 / NRRL 31084 / PH-1</strain>
    </source>
</reference>
<reference key="4">
    <citation type="journal article" date="2010" name="Enzyme Microb. Technol.">
        <title>Enzymatic properties and expression patterns of five extracellular lipases of Fusarium graminearum in vitro.</title>
        <authorList>
            <person name="Nguyen L.N."/>
            <person name="Dao T.T."/>
            <person name="Zivkovic T."/>
            <person name="Fehrholz M."/>
            <person name="Schaefer W."/>
            <person name="Salomon S."/>
        </authorList>
    </citation>
    <scope>FUNCTION</scope>
    <scope>CATALYTIC ACTIVITY</scope>
    <scope>BIOPHYSICOCHEMICAL PROPERTIES</scope>
    <scope>SUBCELLULAR LOCATION</scope>
    <scope>INDUCTION</scope>
</reference>
<gene>
    <name evidence="5" type="primary">FGL4</name>
    <name type="ORF">FG03209</name>
    <name type="ORF">FGRAMPH1_01T12323</name>
</gene>